<protein>
    <recommendedName>
        <fullName>p53 and DNA damage-regulated protein 1</fullName>
    </recommendedName>
</protein>
<evidence type="ECO:0000250" key="1">
    <source>
        <dbReference type="UniProtKB" id="Q9NUG6"/>
    </source>
</evidence>
<evidence type="ECO:0000305" key="2"/>
<keyword id="KW-0143">Chaperone</keyword>
<keyword id="KW-0963">Cytoplasm</keyword>
<keyword id="KW-1185">Reference proteome</keyword>
<comment type="function">
    <text evidence="2">May play a role in chaperone-mediated protein folding.</text>
</comment>
<comment type="subunit">
    <text evidence="1">Component of the PAQosome complex which is responsible for the biogenesis of several protein complexes and which consists of R2TP complex members RUVBL1, RUVBL2, RPAP3 and PIH1D1, URI complex members PFDN2, PFDN6, PDRG1, UXT and URI1 as well as ASDURF, POLR2E and DNAAF10/WDR92.</text>
</comment>
<comment type="subcellular location">
    <subcellularLocation>
        <location evidence="2">Cytoplasm</location>
    </subcellularLocation>
</comment>
<comment type="similarity">
    <text evidence="2">Belongs to the prefoldin subunit beta family.</text>
</comment>
<proteinExistence type="evidence at transcript level"/>
<name>PDRG1_MOUSE</name>
<dbReference type="EMBL" id="AY286302">
    <property type="protein sequence ID" value="AAP45330.1"/>
    <property type="molecule type" value="mRNA"/>
</dbReference>
<dbReference type="EMBL" id="BC031699">
    <property type="protein sequence ID" value="AAH31699.1"/>
    <property type="molecule type" value="mRNA"/>
</dbReference>
<dbReference type="CCDS" id="CCDS16904.1"/>
<dbReference type="RefSeq" id="NP_849270.1">
    <property type="nucleotide sequence ID" value="NM_178939.3"/>
</dbReference>
<dbReference type="RefSeq" id="XP_030107898.1">
    <property type="nucleotide sequence ID" value="XM_030252038.1"/>
</dbReference>
<dbReference type="SMR" id="P59048"/>
<dbReference type="BioGRID" id="212927">
    <property type="interactions" value="4"/>
</dbReference>
<dbReference type="FunCoup" id="P59048">
    <property type="interactions" value="91"/>
</dbReference>
<dbReference type="IntAct" id="P59048">
    <property type="interactions" value="2"/>
</dbReference>
<dbReference type="MINT" id="P59048"/>
<dbReference type="STRING" id="10090.ENSMUSP00000028972"/>
<dbReference type="iPTMnet" id="P59048"/>
<dbReference type="PhosphoSitePlus" id="P59048"/>
<dbReference type="PaxDb" id="10090-ENSMUSP00000028972"/>
<dbReference type="PeptideAtlas" id="P59048"/>
<dbReference type="ProteomicsDB" id="287906"/>
<dbReference type="Pumba" id="P59048"/>
<dbReference type="Antibodypedia" id="25293">
    <property type="antibodies" value="207 antibodies from 26 providers"/>
</dbReference>
<dbReference type="Ensembl" id="ENSMUST00000028972.9">
    <property type="protein sequence ID" value="ENSMUSP00000028972.9"/>
    <property type="gene ID" value="ENSMUSG00000027472.15"/>
</dbReference>
<dbReference type="GeneID" id="68559"/>
<dbReference type="KEGG" id="mmu:68559"/>
<dbReference type="UCSC" id="uc008ngz.1">
    <property type="organism name" value="mouse"/>
</dbReference>
<dbReference type="AGR" id="MGI:1915809"/>
<dbReference type="CTD" id="81572"/>
<dbReference type="MGI" id="MGI:1915809">
    <property type="gene designation" value="Pdrg1"/>
</dbReference>
<dbReference type="VEuPathDB" id="HostDB:ENSMUSG00000027472"/>
<dbReference type="eggNOG" id="ENOG502S6V9">
    <property type="taxonomic scope" value="Eukaryota"/>
</dbReference>
<dbReference type="GeneTree" id="ENSGT00390000013253"/>
<dbReference type="HOGENOM" id="CLU_132161_0_0_1"/>
<dbReference type="InParanoid" id="P59048"/>
<dbReference type="OMA" id="DEKAMVC"/>
<dbReference type="OrthoDB" id="20282at2759"/>
<dbReference type="PhylomeDB" id="P59048"/>
<dbReference type="TreeFam" id="TF329240"/>
<dbReference type="BioGRID-ORCS" id="68559">
    <property type="hits" value="20 hits in 80 CRISPR screens"/>
</dbReference>
<dbReference type="ChiTaRS" id="Pdrg1">
    <property type="organism name" value="mouse"/>
</dbReference>
<dbReference type="PRO" id="PR:P59048"/>
<dbReference type="Proteomes" id="UP000000589">
    <property type="component" value="Chromosome 2"/>
</dbReference>
<dbReference type="RNAct" id="P59048">
    <property type="molecule type" value="protein"/>
</dbReference>
<dbReference type="Bgee" id="ENSMUSG00000027472">
    <property type="expression patterns" value="Expressed in epithelium of lens and 262 other cell types or tissues"/>
</dbReference>
<dbReference type="ExpressionAtlas" id="P59048">
    <property type="expression patterns" value="baseline and differential"/>
</dbReference>
<dbReference type="GO" id="GO:0005737">
    <property type="term" value="C:cytoplasm"/>
    <property type="evidence" value="ECO:0007669"/>
    <property type="project" value="UniProtKB-SubCell"/>
</dbReference>
<dbReference type="GO" id="GO:0016272">
    <property type="term" value="C:prefoldin complex"/>
    <property type="evidence" value="ECO:0007669"/>
    <property type="project" value="InterPro"/>
</dbReference>
<dbReference type="GO" id="GO:1990062">
    <property type="term" value="C:RPAP3/R2TP/prefoldin-like complex"/>
    <property type="evidence" value="ECO:0007669"/>
    <property type="project" value="Ensembl"/>
</dbReference>
<dbReference type="GO" id="GO:0051082">
    <property type="term" value="F:unfolded protein binding"/>
    <property type="evidence" value="ECO:0007669"/>
    <property type="project" value="InterPro"/>
</dbReference>
<dbReference type="GO" id="GO:0006457">
    <property type="term" value="P:protein folding"/>
    <property type="evidence" value="ECO:0007669"/>
    <property type="project" value="InterPro"/>
</dbReference>
<dbReference type="CDD" id="cd22860">
    <property type="entry name" value="PDRG1"/>
    <property type="match status" value="1"/>
</dbReference>
<dbReference type="InterPro" id="IPR030482">
    <property type="entry name" value="PDRG1"/>
</dbReference>
<dbReference type="InterPro" id="IPR002777">
    <property type="entry name" value="PFD_beta-like"/>
</dbReference>
<dbReference type="PANTHER" id="PTHR21162">
    <property type="entry name" value="P53 AND DNA DAMAGE-REGULATED PROTEIN"/>
    <property type="match status" value="1"/>
</dbReference>
<dbReference type="PANTHER" id="PTHR21162:SF0">
    <property type="entry name" value="P53 AND DNA DAMAGE-REGULATED PROTEIN 1"/>
    <property type="match status" value="1"/>
</dbReference>
<dbReference type="Pfam" id="PF01920">
    <property type="entry name" value="Prefoldin_2"/>
    <property type="match status" value="1"/>
</dbReference>
<dbReference type="SUPFAM" id="SSF46579">
    <property type="entry name" value="Prefoldin"/>
    <property type="match status" value="1"/>
</dbReference>
<feature type="chain" id="PRO_0000058278" description="p53 and DNA damage-regulated protein 1">
    <location>
        <begin position="1"/>
        <end position="133"/>
    </location>
</feature>
<organism>
    <name type="scientific">Mus musculus</name>
    <name type="common">Mouse</name>
    <dbReference type="NCBI Taxonomy" id="10090"/>
    <lineage>
        <taxon>Eukaryota</taxon>
        <taxon>Metazoa</taxon>
        <taxon>Chordata</taxon>
        <taxon>Craniata</taxon>
        <taxon>Vertebrata</taxon>
        <taxon>Euteleostomi</taxon>
        <taxon>Mammalia</taxon>
        <taxon>Eutheria</taxon>
        <taxon>Euarchontoglires</taxon>
        <taxon>Glires</taxon>
        <taxon>Rodentia</taxon>
        <taxon>Myomorpha</taxon>
        <taxon>Muroidea</taxon>
        <taxon>Muridae</taxon>
        <taxon>Murinae</taxon>
        <taxon>Mus</taxon>
        <taxon>Mus</taxon>
    </lineage>
</organism>
<reference key="1">
    <citation type="journal article" date="2003" name="Oncogene">
        <title>Cloning and characterization of a novel gene PDRG that is differentially regulated by p53 and ultraviolet radiation.</title>
        <authorList>
            <person name="Luo X."/>
            <person name="Huang Y."/>
            <person name="Sheikh M.S."/>
        </authorList>
    </citation>
    <scope>NUCLEOTIDE SEQUENCE [MRNA]</scope>
    <source>
        <strain>C57BL/6J</strain>
    </source>
</reference>
<reference key="2">
    <citation type="journal article" date="2004" name="Genome Res.">
        <title>The status, quality, and expansion of the NIH full-length cDNA project: the Mammalian Gene Collection (MGC).</title>
        <authorList>
            <consortium name="The MGC Project Team"/>
        </authorList>
    </citation>
    <scope>NUCLEOTIDE SEQUENCE [LARGE SCALE MRNA]</scope>
    <source>
        <strain>Czech II</strain>
        <tissue>Mammary gland</tissue>
    </source>
</reference>
<sequence>MLSPEAERVLRYLVEVEELAEAVLSDKRQIVDLDTKRNQNREGLRALQKDLSVSEDVMVCFGNMFIKMPHPKTKEMIQKDQEHLDKEIERLRSQLKVKVNRLFEAQGKPELKGFNLNPLSPDEVKALKVILKG</sequence>
<accession>P59048</accession>
<gene>
    <name type="primary">Pdrg1</name>
    <name type="synonym">Pdrg</name>
</gene>